<gene>
    <name evidence="1" type="primary">petN</name>
</gene>
<protein>
    <recommendedName>
        <fullName evidence="1">Cytochrome b6-f complex subunit 8</fullName>
    </recommendedName>
    <alternativeName>
        <fullName evidence="1">Cytochrome b6-f complex subunit PetN</fullName>
    </alternativeName>
    <alternativeName>
        <fullName evidence="1">Cytochrome b6-f complex subunit VIII</fullName>
    </alternativeName>
</protein>
<keyword id="KW-0150">Chloroplast</keyword>
<keyword id="KW-0249">Electron transport</keyword>
<keyword id="KW-0472">Membrane</keyword>
<keyword id="KW-0602">Photosynthesis</keyword>
<keyword id="KW-0934">Plastid</keyword>
<keyword id="KW-0793">Thylakoid</keyword>
<keyword id="KW-0812">Transmembrane</keyword>
<keyword id="KW-1133">Transmembrane helix</keyword>
<keyword id="KW-0813">Transport</keyword>
<sequence>MDIVSLAWAALMVVFTFSLSLVVWGRSGL</sequence>
<geneLocation type="chloroplast"/>
<comment type="function">
    <text evidence="1">Component of the cytochrome b6-f complex, which mediates electron transfer between photosystem II (PSII) and photosystem I (PSI), cyclic electron flow around PSI, and state transitions.</text>
</comment>
<comment type="subunit">
    <text evidence="1">The 4 large subunits of the cytochrome b6-f complex are cytochrome b6, subunit IV (17 kDa polypeptide, PetD), cytochrome f and the Rieske protein, while the 4 small subunits are PetG, PetL, PetM and PetN. The complex functions as a dimer.</text>
</comment>
<comment type="subcellular location">
    <subcellularLocation>
        <location evidence="1">Plastid</location>
        <location evidence="1">Chloroplast thylakoid membrane</location>
        <topology evidence="1">Single-pass membrane protein</topology>
    </subcellularLocation>
</comment>
<comment type="similarity">
    <text evidence="1">Belongs to the PetN family.</text>
</comment>
<feature type="chain" id="PRO_0000217123" description="Cytochrome b6-f complex subunit 8">
    <location>
        <begin position="1"/>
        <end position="29"/>
    </location>
</feature>
<feature type="transmembrane region" description="Helical" evidence="1">
    <location>
        <begin position="3"/>
        <end position="23"/>
    </location>
</feature>
<reference key="1">
    <citation type="journal article" date="2004" name="Mol. Phylogenet. Evol.">
        <title>Phylogeny of Panax using chloroplast trnC-trnD intergenic region and the utility of trnC-trnD in interspecific studies of plants.</title>
        <authorList>
            <person name="Lee C."/>
            <person name="Wen J."/>
        </authorList>
    </citation>
    <scope>NUCLEOTIDE SEQUENCE [GENOMIC DNA]</scope>
</reference>
<accession>Q7GQD2</accession>
<organism>
    <name type="scientific">Panax quinquefolius</name>
    <name type="common">American ginseng</name>
    <name type="synonym">Aralia quinquefolia</name>
    <dbReference type="NCBI Taxonomy" id="44588"/>
    <lineage>
        <taxon>Eukaryota</taxon>
        <taxon>Viridiplantae</taxon>
        <taxon>Streptophyta</taxon>
        <taxon>Embryophyta</taxon>
        <taxon>Tracheophyta</taxon>
        <taxon>Spermatophyta</taxon>
        <taxon>Magnoliopsida</taxon>
        <taxon>eudicotyledons</taxon>
        <taxon>Gunneridae</taxon>
        <taxon>Pentapetalae</taxon>
        <taxon>asterids</taxon>
        <taxon>campanulids</taxon>
        <taxon>Apiales</taxon>
        <taxon>Araliaceae</taxon>
        <taxon>Panax</taxon>
    </lineage>
</organism>
<evidence type="ECO:0000255" key="1">
    <source>
        <dbReference type="HAMAP-Rule" id="MF_00395"/>
    </source>
</evidence>
<dbReference type="EMBL" id="AY275937">
    <property type="protein sequence ID" value="AAP34525.1"/>
    <property type="molecule type" value="Genomic_DNA"/>
</dbReference>
<dbReference type="EMBL" id="AY275938">
    <property type="protein sequence ID" value="AAP34527.1"/>
    <property type="molecule type" value="Genomic_DNA"/>
</dbReference>
<dbReference type="EMBL" id="AY275939">
    <property type="protein sequence ID" value="AAP34529.1"/>
    <property type="molecule type" value="Genomic_DNA"/>
</dbReference>
<dbReference type="RefSeq" id="YP_009155421.1">
    <property type="nucleotide sequence ID" value="NC_027456.1"/>
</dbReference>
<dbReference type="SMR" id="Q7GQD2"/>
<dbReference type="GeneID" id="25015473"/>
<dbReference type="GO" id="GO:0009535">
    <property type="term" value="C:chloroplast thylakoid membrane"/>
    <property type="evidence" value="ECO:0007669"/>
    <property type="project" value="UniProtKB-SubCell"/>
</dbReference>
<dbReference type="GO" id="GO:0009512">
    <property type="term" value="C:cytochrome b6f complex"/>
    <property type="evidence" value="ECO:0007669"/>
    <property type="project" value="InterPro"/>
</dbReference>
<dbReference type="GO" id="GO:0045158">
    <property type="term" value="F:electron transporter, transferring electrons within cytochrome b6/f complex of photosystem II activity"/>
    <property type="evidence" value="ECO:0007669"/>
    <property type="project" value="InterPro"/>
</dbReference>
<dbReference type="GO" id="GO:0017004">
    <property type="term" value="P:cytochrome complex assembly"/>
    <property type="evidence" value="ECO:0007669"/>
    <property type="project" value="UniProtKB-UniRule"/>
</dbReference>
<dbReference type="GO" id="GO:0015979">
    <property type="term" value="P:photosynthesis"/>
    <property type="evidence" value="ECO:0007669"/>
    <property type="project" value="UniProtKB-KW"/>
</dbReference>
<dbReference type="HAMAP" id="MF_00395">
    <property type="entry name" value="Cytb6_f_PetN"/>
    <property type="match status" value="1"/>
</dbReference>
<dbReference type="InterPro" id="IPR036143">
    <property type="entry name" value="Cytochr_b6-f_cplx_su8_sf"/>
</dbReference>
<dbReference type="InterPro" id="IPR005497">
    <property type="entry name" value="Cytochrome_b6-f_cplx_su8"/>
</dbReference>
<dbReference type="Pfam" id="PF03742">
    <property type="entry name" value="PetN"/>
    <property type="match status" value="1"/>
</dbReference>
<dbReference type="SUPFAM" id="SSF103451">
    <property type="entry name" value="PetN subunit of the cytochrome b6f complex"/>
    <property type="match status" value="1"/>
</dbReference>
<name>PETN_PANQU</name>
<proteinExistence type="inferred from homology"/>